<reference key="1">
    <citation type="submission" date="2009-02" db="EMBL/GenBank/DDBJ databases">
        <title>Vibrio splendidus str. LGP32 complete genome.</title>
        <authorList>
            <person name="Mazel D."/>
            <person name="Le Roux F."/>
        </authorList>
    </citation>
    <scope>NUCLEOTIDE SEQUENCE [LARGE SCALE GENOMIC DNA]</scope>
    <source>
        <strain>LGP32</strain>
    </source>
</reference>
<comment type="function">
    <text evidence="1">An aminoacyl-tRNA editing enzyme that deacylates mischarged D-aminoacyl-tRNAs. Also deacylates mischarged glycyl-tRNA(Ala), protecting cells against glycine mischarging by AlaRS. Acts via tRNA-based rather than protein-based catalysis; rejects L-amino acids rather than detecting D-amino acids in the active site. By recycling D-aminoacyl-tRNA to D-amino acids and free tRNA molecules, this enzyme counteracts the toxicity associated with the formation of D-aminoacyl-tRNA entities in vivo and helps enforce protein L-homochirality.</text>
</comment>
<comment type="catalytic activity">
    <reaction evidence="1">
        <text>glycyl-tRNA(Ala) + H2O = tRNA(Ala) + glycine + H(+)</text>
        <dbReference type="Rhea" id="RHEA:53744"/>
        <dbReference type="Rhea" id="RHEA-COMP:9657"/>
        <dbReference type="Rhea" id="RHEA-COMP:13640"/>
        <dbReference type="ChEBI" id="CHEBI:15377"/>
        <dbReference type="ChEBI" id="CHEBI:15378"/>
        <dbReference type="ChEBI" id="CHEBI:57305"/>
        <dbReference type="ChEBI" id="CHEBI:78442"/>
        <dbReference type="ChEBI" id="CHEBI:78522"/>
        <dbReference type="EC" id="3.1.1.96"/>
    </reaction>
</comment>
<comment type="catalytic activity">
    <reaction evidence="1">
        <text>a D-aminoacyl-tRNA + H2O = a tRNA + a D-alpha-amino acid + H(+)</text>
        <dbReference type="Rhea" id="RHEA:13953"/>
        <dbReference type="Rhea" id="RHEA-COMP:10123"/>
        <dbReference type="Rhea" id="RHEA-COMP:10124"/>
        <dbReference type="ChEBI" id="CHEBI:15377"/>
        <dbReference type="ChEBI" id="CHEBI:15378"/>
        <dbReference type="ChEBI" id="CHEBI:59871"/>
        <dbReference type="ChEBI" id="CHEBI:78442"/>
        <dbReference type="ChEBI" id="CHEBI:79333"/>
        <dbReference type="EC" id="3.1.1.96"/>
    </reaction>
</comment>
<comment type="subunit">
    <text evidence="1">Homodimer.</text>
</comment>
<comment type="subcellular location">
    <subcellularLocation>
        <location evidence="1">Cytoplasm</location>
    </subcellularLocation>
</comment>
<comment type="domain">
    <text evidence="1">A Gly-cisPro motif from one monomer fits into the active site of the other monomer to allow specific chiral rejection of L-amino acids.</text>
</comment>
<comment type="similarity">
    <text evidence="1">Belongs to the DTD family.</text>
</comment>
<proteinExistence type="inferred from homology"/>
<sequence>MIALIQRVSEAAVRVDGEVVGEIEQGLLVLLGVEKGDDEAKAKRLMERVTTYRVFGDEDDKMNLNVKQVEGKVLVVSQFTLPADTKKGTRAGFSRGAHPEDAERLYNYFSDQCESVLPTERGRFAADMKVSLVNDGPVTFWLQV</sequence>
<feature type="chain" id="PRO_1000146223" description="D-aminoacyl-tRNA deacylase">
    <location>
        <begin position="1"/>
        <end position="144"/>
    </location>
</feature>
<feature type="short sequence motif" description="Gly-cisPro motif, important for rejection of L-amino acids" evidence="1">
    <location>
        <begin position="136"/>
        <end position="137"/>
    </location>
</feature>
<accession>B7VHE8</accession>
<name>DTD_VIBA3</name>
<protein>
    <recommendedName>
        <fullName evidence="1">D-aminoacyl-tRNA deacylase</fullName>
        <shortName evidence="1">DTD</shortName>
        <ecNumber evidence="1">3.1.1.96</ecNumber>
    </recommendedName>
    <alternativeName>
        <fullName evidence="1">Gly-tRNA(Ala) deacylase</fullName>
    </alternativeName>
</protein>
<organism>
    <name type="scientific">Vibrio atlanticus (strain LGP32)</name>
    <name type="common">Vibrio splendidus (strain Mel32)</name>
    <dbReference type="NCBI Taxonomy" id="575788"/>
    <lineage>
        <taxon>Bacteria</taxon>
        <taxon>Pseudomonadati</taxon>
        <taxon>Pseudomonadota</taxon>
        <taxon>Gammaproteobacteria</taxon>
        <taxon>Vibrionales</taxon>
        <taxon>Vibrionaceae</taxon>
        <taxon>Vibrio</taxon>
    </lineage>
</organism>
<evidence type="ECO:0000255" key="1">
    <source>
        <dbReference type="HAMAP-Rule" id="MF_00518"/>
    </source>
</evidence>
<gene>
    <name evidence="1" type="primary">dtd</name>
    <name type="ordered locus">VS_0127</name>
</gene>
<dbReference type="EC" id="3.1.1.96" evidence="1"/>
<dbReference type="EMBL" id="FM954972">
    <property type="protein sequence ID" value="CAV17160.1"/>
    <property type="molecule type" value="Genomic_DNA"/>
</dbReference>
<dbReference type="SMR" id="B7VHE8"/>
<dbReference type="STRING" id="575788.VS_0127"/>
<dbReference type="KEGG" id="vsp:VS_0127"/>
<dbReference type="eggNOG" id="COG1490">
    <property type="taxonomic scope" value="Bacteria"/>
</dbReference>
<dbReference type="HOGENOM" id="CLU_076901_1_1_6"/>
<dbReference type="Proteomes" id="UP000009100">
    <property type="component" value="Chromosome 1"/>
</dbReference>
<dbReference type="GO" id="GO:0005737">
    <property type="term" value="C:cytoplasm"/>
    <property type="evidence" value="ECO:0007669"/>
    <property type="project" value="UniProtKB-SubCell"/>
</dbReference>
<dbReference type="GO" id="GO:0051500">
    <property type="term" value="F:D-tyrosyl-tRNA(Tyr) deacylase activity"/>
    <property type="evidence" value="ECO:0007669"/>
    <property type="project" value="TreeGrafter"/>
</dbReference>
<dbReference type="GO" id="GO:0106026">
    <property type="term" value="F:Gly-tRNA(Ala) deacylase activity"/>
    <property type="evidence" value="ECO:0007669"/>
    <property type="project" value="UniProtKB-UniRule"/>
</dbReference>
<dbReference type="GO" id="GO:0043908">
    <property type="term" value="F:Ser(Gly)-tRNA(Ala) hydrolase activity"/>
    <property type="evidence" value="ECO:0007669"/>
    <property type="project" value="UniProtKB-UniRule"/>
</dbReference>
<dbReference type="GO" id="GO:0000049">
    <property type="term" value="F:tRNA binding"/>
    <property type="evidence" value="ECO:0007669"/>
    <property type="project" value="UniProtKB-UniRule"/>
</dbReference>
<dbReference type="GO" id="GO:0019478">
    <property type="term" value="P:D-amino acid catabolic process"/>
    <property type="evidence" value="ECO:0007669"/>
    <property type="project" value="UniProtKB-UniRule"/>
</dbReference>
<dbReference type="FunFam" id="3.50.80.10:FF:000001">
    <property type="entry name" value="D-aminoacyl-tRNA deacylase"/>
    <property type="match status" value="1"/>
</dbReference>
<dbReference type="Gene3D" id="3.50.80.10">
    <property type="entry name" value="D-tyrosyl-tRNA(Tyr) deacylase"/>
    <property type="match status" value="1"/>
</dbReference>
<dbReference type="HAMAP" id="MF_00518">
    <property type="entry name" value="Deacylase_Dtd"/>
    <property type="match status" value="1"/>
</dbReference>
<dbReference type="InterPro" id="IPR003732">
    <property type="entry name" value="Daa-tRNA_deacyls_DTD"/>
</dbReference>
<dbReference type="InterPro" id="IPR023509">
    <property type="entry name" value="DTD-like_sf"/>
</dbReference>
<dbReference type="NCBIfam" id="TIGR00256">
    <property type="entry name" value="D-aminoacyl-tRNA deacylase"/>
    <property type="match status" value="1"/>
</dbReference>
<dbReference type="PANTHER" id="PTHR10472:SF5">
    <property type="entry name" value="D-AMINOACYL-TRNA DEACYLASE 1"/>
    <property type="match status" value="1"/>
</dbReference>
<dbReference type="PANTHER" id="PTHR10472">
    <property type="entry name" value="D-TYROSYL-TRNA TYR DEACYLASE"/>
    <property type="match status" value="1"/>
</dbReference>
<dbReference type="Pfam" id="PF02580">
    <property type="entry name" value="Tyr_Deacylase"/>
    <property type="match status" value="1"/>
</dbReference>
<dbReference type="SUPFAM" id="SSF69500">
    <property type="entry name" value="DTD-like"/>
    <property type="match status" value="1"/>
</dbReference>
<keyword id="KW-0963">Cytoplasm</keyword>
<keyword id="KW-0378">Hydrolase</keyword>
<keyword id="KW-0694">RNA-binding</keyword>
<keyword id="KW-0820">tRNA-binding</keyword>